<keyword id="KW-0963">Cytoplasm</keyword>
<keyword id="KW-0328">Glycosyltransferase</keyword>
<keyword id="KW-0460">Magnesium</keyword>
<keyword id="KW-0479">Metal-binding</keyword>
<keyword id="KW-0547">Nucleotide-binding</keyword>
<keyword id="KW-0660">Purine salvage</keyword>
<keyword id="KW-0808">Transferase</keyword>
<accession>P0DD41</accession>
<accession>Q7CFM0</accession>
<accession>Q8P321</accession>
<feature type="chain" id="PRO_0000411460" description="Hypoxanthine-guanine phosphoribosyltransferase">
    <location>
        <begin position="1"/>
        <end position="180"/>
    </location>
</feature>
<feature type="active site" description="Proton acceptor" evidence="2">
    <location>
        <position position="103"/>
    </location>
</feature>
<feature type="binding site" evidence="3">
    <location>
        <position position="43"/>
    </location>
    <ligand>
        <name>diphosphate</name>
        <dbReference type="ChEBI" id="CHEBI:33019"/>
    </ligand>
</feature>
<feature type="binding site" evidence="3">
    <location>
        <position position="44"/>
    </location>
    <ligand>
        <name>diphosphate</name>
        <dbReference type="ChEBI" id="CHEBI:33019"/>
    </ligand>
</feature>
<feature type="binding site" evidence="3">
    <location>
        <position position="99"/>
    </location>
    <ligand>
        <name>Mg(2+)</name>
        <dbReference type="ChEBI" id="CHEBI:18420"/>
    </ligand>
</feature>
<feature type="binding site" evidence="3">
    <location>
        <position position="100"/>
    </location>
    <ligand>
        <name>Mg(2+)</name>
        <dbReference type="ChEBI" id="CHEBI:18420"/>
    </ligand>
</feature>
<feature type="binding site" evidence="3">
    <location>
        <position position="131"/>
    </location>
    <ligand>
        <name>GMP</name>
        <dbReference type="ChEBI" id="CHEBI:58115"/>
    </ligand>
</feature>
<feature type="binding site" evidence="3">
    <location>
        <begin position="152"/>
        <end position="153"/>
    </location>
    <ligand>
        <name>GMP</name>
        <dbReference type="ChEBI" id="CHEBI:58115"/>
    </ligand>
</feature>
<feature type="binding site" evidence="3">
    <location>
        <position position="159"/>
    </location>
    <ligand>
        <name>GMP</name>
        <dbReference type="ChEBI" id="CHEBI:58115"/>
    </ligand>
</feature>
<feature type="binding site" evidence="3">
    <location>
        <position position="165"/>
    </location>
    <ligand>
        <name>diphosphate</name>
        <dbReference type="ChEBI" id="CHEBI:33019"/>
    </ligand>
</feature>
<protein>
    <recommendedName>
        <fullName>Hypoxanthine-guanine phosphoribosyltransferase</fullName>
        <shortName>HGPRT</shortName>
        <shortName>HGPRTase</shortName>
        <ecNumber evidence="3">2.4.2.8</ecNumber>
    </recommendedName>
</protein>
<organism>
    <name type="scientific">Streptococcus pyogenes serotype M3 (strain SSI-1)</name>
    <dbReference type="NCBI Taxonomy" id="193567"/>
    <lineage>
        <taxon>Bacteria</taxon>
        <taxon>Bacillati</taxon>
        <taxon>Bacillota</taxon>
        <taxon>Bacilli</taxon>
        <taxon>Lactobacillales</taxon>
        <taxon>Streptococcaceae</taxon>
        <taxon>Streptococcus</taxon>
    </lineage>
</organism>
<evidence type="ECO:0000250" key="1"/>
<evidence type="ECO:0000250" key="2">
    <source>
        <dbReference type="UniProtKB" id="P0A9M2"/>
    </source>
</evidence>
<evidence type="ECO:0000250" key="3">
    <source>
        <dbReference type="UniProtKB" id="P9WHQ9"/>
    </source>
</evidence>
<evidence type="ECO:0000305" key="4"/>
<reference key="1">
    <citation type="journal article" date="2003" name="Genome Res.">
        <title>Genome sequence of an M3 strain of Streptococcus pyogenes reveals a large-scale genomic rearrangement in invasive strains and new insights into phage evolution.</title>
        <authorList>
            <person name="Nakagawa I."/>
            <person name="Kurokawa K."/>
            <person name="Yamashita A."/>
            <person name="Nakata M."/>
            <person name="Tomiyasu Y."/>
            <person name="Okahashi N."/>
            <person name="Kawabata S."/>
            <person name="Yamazaki K."/>
            <person name="Shiba T."/>
            <person name="Yasunaga T."/>
            <person name="Hayashi H."/>
            <person name="Hattori M."/>
            <person name="Hamada S."/>
        </authorList>
    </citation>
    <scope>NUCLEOTIDE SEQUENCE [LARGE SCALE GENOMIC DNA]</scope>
    <source>
        <strain>SSI-1</strain>
    </source>
</reference>
<gene>
    <name type="primary">hpt</name>
    <name type="ordered locus">SPs0012</name>
</gene>
<sequence length="180" mass="20725">MLEQDIQKILYSENDIIRKTKKLGEQLTKDYQEKNPLMIGVLKGSVPFMAELMKHIDTHVEIDFMVVSSYHGGTSSSGEVKILKDVDTNIEGRDIIIVEDIIDTGRTLKYLRDMFKYRKANTIKIATLFDKPEGRVVKIEADYVCYNIPNEFIVGFGLDYAENYRNLPYVGVLKEEVYSK</sequence>
<comment type="function">
    <text evidence="3">Purine salvage pathway enzyme that catalyzes the transfer of the ribosyl-5-phosphate group from 5-phospho-alpha-D-ribose 1-diphosphate (PRPP) to the N9 position of the 6-oxopurines hypoxanthine and guanine to form the corresponding ribonucleotides IMP (inosine 5'-monophosphate) and GMP (guanosine 5'-monophosphate), with the release of PPi.</text>
</comment>
<comment type="catalytic activity">
    <reaction evidence="3">
        <text>IMP + diphosphate = hypoxanthine + 5-phospho-alpha-D-ribose 1-diphosphate</text>
        <dbReference type="Rhea" id="RHEA:17973"/>
        <dbReference type="ChEBI" id="CHEBI:17368"/>
        <dbReference type="ChEBI" id="CHEBI:33019"/>
        <dbReference type="ChEBI" id="CHEBI:58017"/>
        <dbReference type="ChEBI" id="CHEBI:58053"/>
        <dbReference type="EC" id="2.4.2.8"/>
    </reaction>
    <physiologicalReaction direction="right-to-left" evidence="3">
        <dbReference type="Rhea" id="RHEA:17975"/>
    </physiologicalReaction>
</comment>
<comment type="catalytic activity">
    <reaction evidence="3">
        <text>GMP + diphosphate = guanine + 5-phospho-alpha-D-ribose 1-diphosphate</text>
        <dbReference type="Rhea" id="RHEA:25424"/>
        <dbReference type="ChEBI" id="CHEBI:16235"/>
        <dbReference type="ChEBI" id="CHEBI:33019"/>
        <dbReference type="ChEBI" id="CHEBI:58017"/>
        <dbReference type="ChEBI" id="CHEBI:58115"/>
        <dbReference type="EC" id="2.4.2.8"/>
    </reaction>
    <physiologicalReaction direction="right-to-left" evidence="3">
        <dbReference type="Rhea" id="RHEA:25426"/>
    </physiologicalReaction>
</comment>
<comment type="cofactor">
    <cofactor evidence="3">
        <name>Mg(2+)</name>
        <dbReference type="ChEBI" id="CHEBI:18420"/>
    </cofactor>
</comment>
<comment type="pathway">
    <text evidence="3">Purine metabolism; IMP biosynthesis via salvage pathway; IMP from hypoxanthine: step 1/1.</text>
</comment>
<comment type="pathway">
    <text evidence="3">Purine metabolism; GMP biosynthesis via salvage pathway; GMP from guanine: step 1/1.</text>
</comment>
<comment type="subcellular location">
    <subcellularLocation>
        <location evidence="1">Cytoplasm</location>
    </subcellularLocation>
</comment>
<comment type="similarity">
    <text evidence="4">Belongs to the purine/pyrimidine phosphoribosyltransferase family.</text>
</comment>
<dbReference type="EC" id="2.4.2.8" evidence="3"/>
<dbReference type="EMBL" id="BA000034">
    <property type="protein sequence ID" value="BAC63107.1"/>
    <property type="molecule type" value="Genomic_DNA"/>
</dbReference>
<dbReference type="RefSeq" id="WP_002981912.1">
    <property type="nucleotide sequence ID" value="NC_004606.1"/>
</dbReference>
<dbReference type="SMR" id="P0DD41"/>
<dbReference type="GeneID" id="69899963"/>
<dbReference type="KEGG" id="sps:SPs0012"/>
<dbReference type="HOGENOM" id="CLU_073615_0_0_9"/>
<dbReference type="UniPathway" id="UPA00591">
    <property type="reaction ID" value="UER00648"/>
</dbReference>
<dbReference type="UniPathway" id="UPA00909">
    <property type="reaction ID" value="UER00887"/>
</dbReference>
<dbReference type="GO" id="GO:0005829">
    <property type="term" value="C:cytosol"/>
    <property type="evidence" value="ECO:0007669"/>
    <property type="project" value="TreeGrafter"/>
</dbReference>
<dbReference type="GO" id="GO:0052657">
    <property type="term" value="F:guanine phosphoribosyltransferase activity"/>
    <property type="evidence" value="ECO:0007669"/>
    <property type="project" value="RHEA"/>
</dbReference>
<dbReference type="GO" id="GO:0004422">
    <property type="term" value="F:hypoxanthine phosphoribosyltransferase activity"/>
    <property type="evidence" value="ECO:0007669"/>
    <property type="project" value="InterPro"/>
</dbReference>
<dbReference type="GO" id="GO:0000287">
    <property type="term" value="F:magnesium ion binding"/>
    <property type="evidence" value="ECO:0007669"/>
    <property type="project" value="TreeGrafter"/>
</dbReference>
<dbReference type="GO" id="GO:0000166">
    <property type="term" value="F:nucleotide binding"/>
    <property type="evidence" value="ECO:0007669"/>
    <property type="project" value="UniProtKB-KW"/>
</dbReference>
<dbReference type="GO" id="GO:0032263">
    <property type="term" value="P:GMP salvage"/>
    <property type="evidence" value="ECO:0007669"/>
    <property type="project" value="UniProtKB-UniPathway"/>
</dbReference>
<dbReference type="GO" id="GO:0006178">
    <property type="term" value="P:guanine salvage"/>
    <property type="evidence" value="ECO:0007669"/>
    <property type="project" value="TreeGrafter"/>
</dbReference>
<dbReference type="GO" id="GO:0046100">
    <property type="term" value="P:hypoxanthine metabolic process"/>
    <property type="evidence" value="ECO:0007669"/>
    <property type="project" value="TreeGrafter"/>
</dbReference>
<dbReference type="GO" id="GO:0032264">
    <property type="term" value="P:IMP salvage"/>
    <property type="evidence" value="ECO:0007669"/>
    <property type="project" value="UniProtKB-UniPathway"/>
</dbReference>
<dbReference type="GO" id="GO:0006166">
    <property type="term" value="P:purine ribonucleoside salvage"/>
    <property type="evidence" value="ECO:0007669"/>
    <property type="project" value="UniProtKB-KW"/>
</dbReference>
<dbReference type="CDD" id="cd06223">
    <property type="entry name" value="PRTases_typeI"/>
    <property type="match status" value="1"/>
</dbReference>
<dbReference type="FunFam" id="3.40.50.2020:FF:000006">
    <property type="entry name" value="Hypoxanthine phosphoribosyltransferase"/>
    <property type="match status" value="1"/>
</dbReference>
<dbReference type="Gene3D" id="3.40.50.2020">
    <property type="match status" value="1"/>
</dbReference>
<dbReference type="InterPro" id="IPR050408">
    <property type="entry name" value="HGPRT"/>
</dbReference>
<dbReference type="InterPro" id="IPR005904">
    <property type="entry name" value="Hxn_phspho_trans"/>
</dbReference>
<dbReference type="InterPro" id="IPR000836">
    <property type="entry name" value="PRibTrfase_dom"/>
</dbReference>
<dbReference type="InterPro" id="IPR029057">
    <property type="entry name" value="PRTase-like"/>
</dbReference>
<dbReference type="NCBIfam" id="TIGR01203">
    <property type="entry name" value="HGPRTase"/>
    <property type="match status" value="1"/>
</dbReference>
<dbReference type="PANTHER" id="PTHR43340:SF1">
    <property type="entry name" value="HYPOXANTHINE PHOSPHORIBOSYLTRANSFERASE"/>
    <property type="match status" value="1"/>
</dbReference>
<dbReference type="PANTHER" id="PTHR43340">
    <property type="entry name" value="HYPOXANTHINE-GUANINE PHOSPHORIBOSYLTRANSFERASE"/>
    <property type="match status" value="1"/>
</dbReference>
<dbReference type="Pfam" id="PF00156">
    <property type="entry name" value="Pribosyltran"/>
    <property type="match status" value="1"/>
</dbReference>
<dbReference type="SUPFAM" id="SSF53271">
    <property type="entry name" value="PRTase-like"/>
    <property type="match status" value="1"/>
</dbReference>
<dbReference type="PROSITE" id="PS00103">
    <property type="entry name" value="PUR_PYR_PR_TRANSFER"/>
    <property type="match status" value="1"/>
</dbReference>
<name>HGPRT_STRPQ</name>
<proteinExistence type="inferred from homology"/>